<feature type="chain" id="PRO_0000420572" description="Spermatogenesis-associated protein 31">
    <location>
        <begin position="1"/>
        <end position="1014"/>
    </location>
</feature>
<feature type="transmembrane region" description="Helical" evidence="2">
    <location>
        <begin position="22"/>
        <end position="42"/>
    </location>
</feature>
<feature type="region of interest" description="Disordered" evidence="3">
    <location>
        <begin position="925"/>
        <end position="961"/>
    </location>
</feature>
<feature type="sequence conflict" description="In Ref. 1; AAW29519." evidence="5" ref="1">
    <original>N</original>
    <variation>D</variation>
    <location>
        <position position="55"/>
    </location>
</feature>
<feature type="sequence conflict" description="In Ref. 1; AAW29519." evidence="5" ref="1">
    <original>W</original>
    <variation>R</variation>
    <location>
        <position position="87"/>
    </location>
</feature>
<feature type="sequence conflict" description="In Ref. 1; AAW29519." evidence="5" ref="1">
    <original>S</original>
    <variation>P</variation>
    <location>
        <position position="123"/>
    </location>
</feature>
<feature type="sequence conflict" description="In Ref. 1; AAW29519." evidence="5" ref="1">
    <original>L</original>
    <variation>S</variation>
    <location>
        <position position="385"/>
    </location>
</feature>
<feature type="sequence conflict" description="In Ref. 1; AAW29519." evidence="5" ref="1">
    <original>Q</original>
    <variation>R</variation>
    <location>
        <position position="581"/>
    </location>
</feature>
<feature type="sequence conflict" description="In Ref. 1; AAW29519." evidence="5" ref="1">
    <original>A</original>
    <variation>V</variation>
    <location>
        <position position="875"/>
    </location>
</feature>
<reference key="1">
    <citation type="journal article" date="2006" name="J. Cell. Physiol.">
        <title>Acrosome-specific gene AEP1: identification, characterization and roles in spermatogenesis.</title>
        <authorList>
            <person name="Luk J.M."/>
            <person name="Lee N.P."/>
            <person name="Shum C.K."/>
            <person name="Lam B.Y."/>
            <person name="Siu A.F."/>
            <person name="Che C.M."/>
            <person name="Tam P.C."/>
            <person name="Cheung A.N."/>
            <person name="Yang Z.M."/>
            <person name="Lin Y.N."/>
            <person name="Matzuk M.M."/>
            <person name="Lee K.F."/>
            <person name="Yeung W.S."/>
        </authorList>
    </citation>
    <scope>NUCLEOTIDE SEQUENCE [MRNA]</scope>
    <source>
        <strain>BALB/cJ</strain>
        <tissue>Testis</tissue>
    </source>
</reference>
<reference key="2">
    <citation type="journal article" date="2009" name="PLoS Biol.">
        <title>Lineage-specific biology revealed by a finished genome assembly of the mouse.</title>
        <authorList>
            <person name="Church D.M."/>
            <person name="Goodstadt L."/>
            <person name="Hillier L.W."/>
            <person name="Zody M.C."/>
            <person name="Goldstein S."/>
            <person name="She X."/>
            <person name="Bult C.J."/>
            <person name="Agarwala R."/>
            <person name="Cherry J.L."/>
            <person name="DiCuccio M."/>
            <person name="Hlavina W."/>
            <person name="Kapustin Y."/>
            <person name="Meric P."/>
            <person name="Maglott D."/>
            <person name="Birtle Z."/>
            <person name="Marques A.C."/>
            <person name="Graves T."/>
            <person name="Zhou S."/>
            <person name="Teague B."/>
            <person name="Potamousis K."/>
            <person name="Churas C."/>
            <person name="Place M."/>
            <person name="Herschleb J."/>
            <person name="Runnheim R."/>
            <person name="Forrest D."/>
            <person name="Amos-Landgraf J."/>
            <person name="Schwartz D.C."/>
            <person name="Cheng Z."/>
            <person name="Lindblad-Toh K."/>
            <person name="Eichler E.E."/>
            <person name="Ponting C.P."/>
        </authorList>
    </citation>
    <scope>NUCLEOTIDE SEQUENCE [LARGE SCALE GENOMIC DNA]</scope>
    <source>
        <strain>C57BL/6J</strain>
    </source>
</reference>
<reference key="3">
    <citation type="journal article" date="2010" name="Biochem. Biophys. Res. Commun.">
        <title>The testis-specific VAD1.3/AEP1 interacts with ?-actin and syntaxin 1 and directs peri-nuclear/Golgi expression with bipartite nucleus localization (BNL) sequence.</title>
        <authorList>
            <person name="Zuo Y."/>
            <person name="Gao J."/>
            <person name="Yeung W.S."/>
            <person name="Lee K.F."/>
        </authorList>
    </citation>
    <scope>SUBCELLULAR LOCATION</scope>
    <scope>INTERACTION WITH ACTB AND SYNTAXIN 1</scope>
</reference>
<accession>E9QAF0</accession>
<accession>Q5MAT5</accession>
<proteinExistence type="evidence at protein level"/>
<organism>
    <name type="scientific">Mus musculus</name>
    <name type="common">Mouse</name>
    <dbReference type="NCBI Taxonomy" id="10090"/>
    <lineage>
        <taxon>Eukaryota</taxon>
        <taxon>Metazoa</taxon>
        <taxon>Chordata</taxon>
        <taxon>Craniata</taxon>
        <taxon>Vertebrata</taxon>
        <taxon>Euteleostomi</taxon>
        <taxon>Mammalia</taxon>
        <taxon>Eutheria</taxon>
        <taxon>Euarchontoglires</taxon>
        <taxon>Glires</taxon>
        <taxon>Rodentia</taxon>
        <taxon>Myomorpha</taxon>
        <taxon>Muroidea</taxon>
        <taxon>Muridae</taxon>
        <taxon>Murinae</taxon>
        <taxon>Mus</taxon>
        <taxon>Mus</taxon>
    </lineage>
</organism>
<protein>
    <recommendedName>
        <fullName>Spermatogenesis-associated protein 31</fullName>
    </recommendedName>
    <alternativeName>
        <fullName>Acrosome-expressed protein 1</fullName>
    </alternativeName>
</protein>
<comment type="function">
    <text evidence="1">May play a role in spermatogenesis.</text>
</comment>
<comment type="subunit">
    <text evidence="4">Interacts with ACTB and STX1A and/or STX1B.</text>
</comment>
<comment type="subcellular location">
    <subcellularLocation>
        <location evidence="5">Cytoplasmic vesicle</location>
        <location evidence="5">Secretory vesicle</location>
        <location evidence="5">Acrosome membrane</location>
        <topology evidence="5">Single-pass membrane protein</topology>
    </subcellularLocation>
    <subcellularLocation>
        <location evidence="4">Cytoplasmic vesicle</location>
        <location evidence="4">Secretory vesicle</location>
        <location evidence="4">Acrosome lumen</location>
    </subcellularLocation>
    <text>Localizes to the inner and outer membranes as well as to the matrix of the acrosome.</text>
</comment>
<comment type="similarity">
    <text evidence="5">Belongs to the SPATA31 family.</text>
</comment>
<name>SPT31_MOUSE</name>
<gene>
    <name type="primary">Spata31</name>
    <name type="synonym">Aep1</name>
    <name type="synonym">Vad1.3</name>
</gene>
<keyword id="KW-0968">Cytoplasmic vesicle</keyword>
<keyword id="KW-0221">Differentiation</keyword>
<keyword id="KW-0472">Membrane</keyword>
<keyword id="KW-1185">Reference proteome</keyword>
<keyword id="KW-0744">Spermatogenesis</keyword>
<keyword id="KW-0812">Transmembrane</keyword>
<keyword id="KW-1133">Transmembrane helix</keyword>
<evidence type="ECO:0000250" key="1"/>
<evidence type="ECO:0000255" key="2"/>
<evidence type="ECO:0000256" key="3">
    <source>
        <dbReference type="SAM" id="MobiDB-lite"/>
    </source>
</evidence>
<evidence type="ECO:0000269" key="4">
    <source>
    </source>
</evidence>
<evidence type="ECO:0000305" key="5"/>
<dbReference type="EMBL" id="AY842249">
    <property type="protein sequence ID" value="AAW29519.1"/>
    <property type="molecule type" value="mRNA"/>
</dbReference>
<dbReference type="EMBL" id="AC159190">
    <property type="status" value="NOT_ANNOTATED_CDS"/>
    <property type="molecule type" value="Genomic_DNA"/>
</dbReference>
<dbReference type="CCDS" id="CCDS26602.1"/>
<dbReference type="RefSeq" id="NP_084323.2">
    <property type="nucleotide sequence ID" value="NM_030047.2"/>
</dbReference>
<dbReference type="SMR" id="E9QAF0"/>
<dbReference type="FunCoup" id="E9QAF0">
    <property type="interactions" value="76"/>
</dbReference>
<dbReference type="STRING" id="10090.ENSMUSP00000097025"/>
<dbReference type="iPTMnet" id="E9QAF0"/>
<dbReference type="PhosphoSitePlus" id="E9QAF0"/>
<dbReference type="PaxDb" id="10090-ENSMUSP00000097025"/>
<dbReference type="ProteomicsDB" id="254545"/>
<dbReference type="Ensembl" id="ENSMUST00000070216.9">
    <property type="protein sequence ID" value="ENSMUSP00000097025.4"/>
    <property type="gene ID" value="ENSMUSG00000056223.9"/>
</dbReference>
<dbReference type="GeneID" id="78124"/>
<dbReference type="KEGG" id="mmu:78124"/>
<dbReference type="UCSC" id="uc007qza.2">
    <property type="organism name" value="mouse"/>
</dbReference>
<dbReference type="AGR" id="MGI:1925374"/>
<dbReference type="CTD" id="78124"/>
<dbReference type="MGI" id="MGI:1925374">
    <property type="gene designation" value="Spata31"/>
</dbReference>
<dbReference type="VEuPathDB" id="HostDB:ENSMUSG00000056223"/>
<dbReference type="eggNOG" id="ENOG502RU0E">
    <property type="taxonomic scope" value="Eukaryota"/>
</dbReference>
<dbReference type="GeneTree" id="ENSGT00950000183043"/>
<dbReference type="HOGENOM" id="CLU_005668_2_1_1"/>
<dbReference type="InParanoid" id="E9QAF0"/>
<dbReference type="OMA" id="VSQCHLV"/>
<dbReference type="OrthoDB" id="9806404at2759"/>
<dbReference type="PhylomeDB" id="E9QAF0"/>
<dbReference type="TreeFam" id="TF338531"/>
<dbReference type="BioGRID-ORCS" id="78124">
    <property type="hits" value="1 hit in 76 CRISPR screens"/>
</dbReference>
<dbReference type="PRO" id="PR:E9QAF0"/>
<dbReference type="Proteomes" id="UP000000589">
    <property type="component" value="Chromosome 13"/>
</dbReference>
<dbReference type="RNAct" id="E9QAF0">
    <property type="molecule type" value="protein"/>
</dbReference>
<dbReference type="Bgee" id="ENSMUSG00000056223">
    <property type="expression patterns" value="Expressed in testis and 5 other cell types or tissues"/>
</dbReference>
<dbReference type="ExpressionAtlas" id="E9QAF0">
    <property type="expression patterns" value="baseline and differential"/>
</dbReference>
<dbReference type="GO" id="GO:0043160">
    <property type="term" value="C:acrosomal lumen"/>
    <property type="evidence" value="ECO:0007669"/>
    <property type="project" value="UniProtKB-SubCell"/>
</dbReference>
<dbReference type="GO" id="GO:0002080">
    <property type="term" value="C:acrosomal membrane"/>
    <property type="evidence" value="ECO:0007669"/>
    <property type="project" value="UniProtKB-SubCell"/>
</dbReference>
<dbReference type="GO" id="GO:0030154">
    <property type="term" value="P:cell differentiation"/>
    <property type="evidence" value="ECO:0007669"/>
    <property type="project" value="UniProtKB-KW"/>
</dbReference>
<dbReference type="GO" id="GO:0007283">
    <property type="term" value="P:spermatogenesis"/>
    <property type="evidence" value="ECO:0007669"/>
    <property type="project" value="UniProtKB-KW"/>
</dbReference>
<dbReference type="InterPro" id="IPR039509">
    <property type="entry name" value="SPATA31"/>
</dbReference>
<dbReference type="PANTHER" id="PTHR21859">
    <property type="entry name" value="ACROSOME-SPECIFIC PROTEIN"/>
    <property type="match status" value="1"/>
</dbReference>
<dbReference type="PANTHER" id="PTHR21859:SF55">
    <property type="entry name" value="SPERMATOGENESIS-ASSOCIATED PROTEIN 31A1-RELATED"/>
    <property type="match status" value="1"/>
</dbReference>
<dbReference type="Pfam" id="PF14650">
    <property type="entry name" value="FAM75"/>
    <property type="match status" value="2"/>
</dbReference>
<sequence length="1014" mass="115834">MESLPSLLESIYTTWLSLSSTIWAMDMILAFVCGLGLYHLLLPFLESHLSSPPSNIKFTRKPQIQMTWQSQFKKKFRNHCRNDAKAWGECLKKLKEKEKDKLFLEEMSPGHHLNSLGNIFNSSSAKQDSTTLSPFWNLKEKSEEQVATQKLSYPKISEDHFQQKCDQLFWGLPSLHSESLVAAAWIPQTTSTLPSPFFLFNVISSVYPIQLQDKMSPMLPHTHPLSYLDLQSPHLILSPLEFQTPALNLPVLLPSSLPYNSDFGTSYSQSQSKPQYLPTEIKYNKKPSLAKQIENRSTLPLMVQKPQEAYDILAPNPSQDWVVSILPDNFPICRELREKLEQHIQKWLIQHQWNFPHKIQVSEKMKELQNTVIGNCQTRDKPGTLQALGEHSNEGQKRKFQLEKESGKNLGPILGKISKDPIRGLEKTTAIKDLENNLKAHLGTKSGQIDQGLTPLSMRQSWLAVDDSFYEMENNLTSLKSSAKSMCSSEKLAFLKPETRQALEAHIVRFWAKHRWSLPLKILKPVKLFQLSIESLPVVLCAQTSSTTSVHRTRSAAEVVRFLGKPCLRQMIIEDSSPSPQNLLLVSSPSCKRARRRLPFGVDHEPSTALPTKPECGHISEDLTYNFMNTTSQTRTIFKKEIETREVVLLPRRTSDQNLEAYKHQEKVVSEFPHNVETELAGQPQIYTTTVLPPKRSRSMPLPVDTLTSHVLGDIVVADMDNSLVQQRPSTPKHLVSQKSQIKMLAPTYQSEGTKRQSEIKYEDRPKLTPVTEKKANFGSQYYQTLPKIAQVLPGRPPQRHLGRFLQWIHPKKTIKGHEFHPLKGNPTAAIVQNQRRQVRKIPYMDNNVTEAQELMTTVGQMLEKKMMLQHQPYASKFNQHREVPPAPMSRFSHGHMPVSYLQQRRAPSYPGSCSCQRCSVQNRHIRNQLPQRSVRFSKKPQNPRNPSHKKPQNPRNPSRLSRNAALNLVNSQNRTIVPGNSNHHLYCPRHCALQRDVCRELGHSSVVFPNRKT</sequence>